<reference key="1">
    <citation type="journal article" date="2007" name="BMC Microbiol.">
        <title>Subtle genetic changes enhance virulence of methicillin resistant and sensitive Staphylococcus aureus.</title>
        <authorList>
            <person name="Highlander S.K."/>
            <person name="Hulten K.G."/>
            <person name="Qin X."/>
            <person name="Jiang H."/>
            <person name="Yerrapragada S."/>
            <person name="Mason E.O. Jr."/>
            <person name="Shang Y."/>
            <person name="Williams T.M."/>
            <person name="Fortunov R.M."/>
            <person name="Liu Y."/>
            <person name="Igboeli O."/>
            <person name="Petrosino J."/>
            <person name="Tirumalai M."/>
            <person name="Uzman A."/>
            <person name="Fox G.E."/>
            <person name="Cardenas A.M."/>
            <person name="Muzny D.M."/>
            <person name="Hemphill L."/>
            <person name="Ding Y."/>
            <person name="Dugan S."/>
            <person name="Blyth P.R."/>
            <person name="Buhay C.J."/>
            <person name="Dinh H.H."/>
            <person name="Hawes A.C."/>
            <person name="Holder M."/>
            <person name="Kovar C.L."/>
            <person name="Lee S.L."/>
            <person name="Liu W."/>
            <person name="Nazareth L.V."/>
            <person name="Wang Q."/>
            <person name="Zhou J."/>
            <person name="Kaplan S.L."/>
            <person name="Weinstock G.M."/>
        </authorList>
    </citation>
    <scope>NUCLEOTIDE SEQUENCE [LARGE SCALE GENOMIC DNA]</scope>
    <source>
        <strain>USA300 / TCH1516</strain>
    </source>
</reference>
<dbReference type="EMBL" id="CP000730">
    <property type="protein sequence ID" value="ABX29101.1"/>
    <property type="molecule type" value="Genomic_DNA"/>
</dbReference>
<dbReference type="RefSeq" id="WP_000390529.1">
    <property type="nucleotide sequence ID" value="NC_010079.1"/>
</dbReference>
<dbReference type="SMR" id="A8Z1S8"/>
<dbReference type="KEGG" id="sax:USA300HOU_1082"/>
<dbReference type="HOGENOM" id="CLU_014841_3_2_9"/>
<dbReference type="GO" id="GO:0005737">
    <property type="term" value="C:cytoplasm"/>
    <property type="evidence" value="ECO:0007669"/>
    <property type="project" value="UniProtKB-SubCell"/>
</dbReference>
<dbReference type="GO" id="GO:0009380">
    <property type="term" value="C:excinuclease repair complex"/>
    <property type="evidence" value="ECO:0007669"/>
    <property type="project" value="InterPro"/>
</dbReference>
<dbReference type="GO" id="GO:0003677">
    <property type="term" value="F:DNA binding"/>
    <property type="evidence" value="ECO:0007669"/>
    <property type="project" value="UniProtKB-UniRule"/>
</dbReference>
<dbReference type="GO" id="GO:0009381">
    <property type="term" value="F:excinuclease ABC activity"/>
    <property type="evidence" value="ECO:0007669"/>
    <property type="project" value="UniProtKB-UniRule"/>
</dbReference>
<dbReference type="GO" id="GO:0006289">
    <property type="term" value="P:nucleotide-excision repair"/>
    <property type="evidence" value="ECO:0007669"/>
    <property type="project" value="UniProtKB-UniRule"/>
</dbReference>
<dbReference type="GO" id="GO:0009432">
    <property type="term" value="P:SOS response"/>
    <property type="evidence" value="ECO:0007669"/>
    <property type="project" value="UniProtKB-UniRule"/>
</dbReference>
<dbReference type="CDD" id="cd10434">
    <property type="entry name" value="GIY-YIG_UvrC_Cho"/>
    <property type="match status" value="1"/>
</dbReference>
<dbReference type="FunFam" id="3.30.420.340:FF:000002">
    <property type="entry name" value="UvrABC system protein C"/>
    <property type="match status" value="1"/>
</dbReference>
<dbReference type="FunFam" id="3.40.1440.10:FF:000001">
    <property type="entry name" value="UvrABC system protein C"/>
    <property type="match status" value="1"/>
</dbReference>
<dbReference type="FunFam" id="4.10.860.10:FF:000007">
    <property type="entry name" value="UvrABC system protein C"/>
    <property type="match status" value="1"/>
</dbReference>
<dbReference type="Gene3D" id="1.10.150.20">
    <property type="entry name" value="5' to 3' exonuclease, C-terminal subdomain"/>
    <property type="match status" value="1"/>
</dbReference>
<dbReference type="Gene3D" id="3.40.1440.10">
    <property type="entry name" value="GIY-YIG endonuclease"/>
    <property type="match status" value="1"/>
</dbReference>
<dbReference type="Gene3D" id="4.10.860.10">
    <property type="entry name" value="UVR domain"/>
    <property type="match status" value="1"/>
</dbReference>
<dbReference type="Gene3D" id="3.30.420.340">
    <property type="entry name" value="UvrC, RNAse H endonuclease domain"/>
    <property type="match status" value="1"/>
</dbReference>
<dbReference type="HAMAP" id="MF_00203">
    <property type="entry name" value="UvrC"/>
    <property type="match status" value="1"/>
</dbReference>
<dbReference type="InterPro" id="IPR000305">
    <property type="entry name" value="GIY-YIG_endonuc"/>
</dbReference>
<dbReference type="InterPro" id="IPR035901">
    <property type="entry name" value="GIY-YIG_endonuc_sf"/>
</dbReference>
<dbReference type="InterPro" id="IPR047296">
    <property type="entry name" value="GIY-YIG_UvrC_Cho"/>
</dbReference>
<dbReference type="InterPro" id="IPR010994">
    <property type="entry name" value="RuvA_2-like"/>
</dbReference>
<dbReference type="InterPro" id="IPR001943">
    <property type="entry name" value="UVR_dom"/>
</dbReference>
<dbReference type="InterPro" id="IPR036876">
    <property type="entry name" value="UVR_dom_sf"/>
</dbReference>
<dbReference type="InterPro" id="IPR050066">
    <property type="entry name" value="UvrABC_protein_C"/>
</dbReference>
<dbReference type="InterPro" id="IPR004791">
    <property type="entry name" value="UvrC"/>
</dbReference>
<dbReference type="InterPro" id="IPR001162">
    <property type="entry name" value="UvrC_RNase_H_dom"/>
</dbReference>
<dbReference type="InterPro" id="IPR038476">
    <property type="entry name" value="UvrC_RNase_H_dom_sf"/>
</dbReference>
<dbReference type="NCBIfam" id="TIGR00194">
    <property type="entry name" value="uvrC"/>
    <property type="match status" value="1"/>
</dbReference>
<dbReference type="PANTHER" id="PTHR30562:SF1">
    <property type="entry name" value="UVRABC SYSTEM PROTEIN C"/>
    <property type="match status" value="1"/>
</dbReference>
<dbReference type="PANTHER" id="PTHR30562">
    <property type="entry name" value="UVRC/OXIDOREDUCTASE"/>
    <property type="match status" value="1"/>
</dbReference>
<dbReference type="Pfam" id="PF01541">
    <property type="entry name" value="GIY-YIG"/>
    <property type="match status" value="1"/>
</dbReference>
<dbReference type="Pfam" id="PF02151">
    <property type="entry name" value="UVR"/>
    <property type="match status" value="1"/>
</dbReference>
<dbReference type="Pfam" id="PF22920">
    <property type="entry name" value="UvrC_RNaseH"/>
    <property type="match status" value="1"/>
</dbReference>
<dbReference type="Pfam" id="PF08459">
    <property type="entry name" value="UvrC_RNaseH_dom"/>
    <property type="match status" value="1"/>
</dbReference>
<dbReference type="SMART" id="SM00465">
    <property type="entry name" value="GIYc"/>
    <property type="match status" value="1"/>
</dbReference>
<dbReference type="SUPFAM" id="SSF46600">
    <property type="entry name" value="C-terminal UvrC-binding domain of UvrB"/>
    <property type="match status" value="1"/>
</dbReference>
<dbReference type="SUPFAM" id="SSF82771">
    <property type="entry name" value="GIY-YIG endonuclease"/>
    <property type="match status" value="1"/>
</dbReference>
<dbReference type="SUPFAM" id="SSF47781">
    <property type="entry name" value="RuvA domain 2-like"/>
    <property type="match status" value="1"/>
</dbReference>
<dbReference type="PROSITE" id="PS50164">
    <property type="entry name" value="GIY_YIG"/>
    <property type="match status" value="1"/>
</dbReference>
<dbReference type="PROSITE" id="PS50151">
    <property type="entry name" value="UVR"/>
    <property type="match status" value="1"/>
</dbReference>
<dbReference type="PROSITE" id="PS50165">
    <property type="entry name" value="UVRC"/>
    <property type="match status" value="1"/>
</dbReference>
<keyword id="KW-0963">Cytoplasm</keyword>
<keyword id="KW-0227">DNA damage</keyword>
<keyword id="KW-0228">DNA excision</keyword>
<keyword id="KW-0234">DNA repair</keyword>
<keyword id="KW-0267">Excision nuclease</keyword>
<keyword id="KW-0742">SOS response</keyword>
<comment type="function">
    <text evidence="1">The UvrABC repair system catalyzes the recognition and processing of DNA lesions. UvrC both incises the 5' and 3' sides of the lesion. The N-terminal half is responsible for the 3' incision and the C-terminal half is responsible for the 5' incision.</text>
</comment>
<comment type="subunit">
    <text evidence="1">Interacts with UvrB in an incision complex.</text>
</comment>
<comment type="subcellular location">
    <subcellularLocation>
        <location evidence="1">Cytoplasm</location>
    </subcellularLocation>
</comment>
<comment type="similarity">
    <text evidence="1">Belongs to the UvrC family.</text>
</comment>
<accession>A8Z1S8</accession>
<proteinExistence type="inferred from homology"/>
<organism>
    <name type="scientific">Staphylococcus aureus (strain USA300 / TCH1516)</name>
    <dbReference type="NCBI Taxonomy" id="451516"/>
    <lineage>
        <taxon>Bacteria</taxon>
        <taxon>Bacillati</taxon>
        <taxon>Bacillota</taxon>
        <taxon>Bacilli</taxon>
        <taxon>Bacillales</taxon>
        <taxon>Staphylococcaceae</taxon>
        <taxon>Staphylococcus</taxon>
    </lineage>
</organism>
<gene>
    <name evidence="1" type="primary">uvrC</name>
    <name type="ordered locus">USA300HOU_1082</name>
</gene>
<feature type="chain" id="PRO_1000077849" description="UvrABC system protein C">
    <location>
        <begin position="1"/>
        <end position="593"/>
    </location>
</feature>
<feature type="domain" description="GIY-YIG" evidence="1">
    <location>
        <begin position="17"/>
        <end position="94"/>
    </location>
</feature>
<feature type="domain" description="UVR" evidence="1">
    <location>
        <begin position="199"/>
        <end position="234"/>
    </location>
</feature>
<evidence type="ECO:0000255" key="1">
    <source>
        <dbReference type="HAMAP-Rule" id="MF_00203"/>
    </source>
</evidence>
<protein>
    <recommendedName>
        <fullName evidence="1">UvrABC system protein C</fullName>
        <shortName evidence="1">Protein UvrC</shortName>
    </recommendedName>
    <alternativeName>
        <fullName evidence="1">Excinuclease ABC subunit C</fullName>
    </alternativeName>
</protein>
<name>UVRC_STAAT</name>
<sequence length="593" mass="68671">MEDYKQRIKNKLNVVPMEPGCYLMKDRNDQVIYVGKAKKLRNRLRSYFTGAHDAKTTRLVGEIRRFEFIVTSSETESLLLELNLIKQYQPRYNILLKDDKSYPFIKITKEKYPRLLVTRTVKQGTGKYFGPYPNAYSAQETKKLLDRIYPYRKCDKMPDKLCLYYHIGQCLGPCVYDVDLSKYAQMTKEITDFLNGEDKTILKSLEERMLTASESLDFERAKEYRDLIQHIQNLTNKQKIMSSDKTIRDVFGYSVDKGWMCIQVFFIRQGNMIKRDTTMIPLQQTEEEEFYTFIGQFYSLNQHILPKEVHVPRNLDKEMIQSVVDTKIVQPARGPKKDMVDLAAHNAKVSLNNKFELISRDESRTIKAIEELGTQMGIQTPIRIEAFDNSNIQGVDPVSAMVTFVDGKPDKKNYRKYKIKTVKGPDDYKSMREVVRRRYSRVLNEGLPLPDLIIVDGGKGHMNGVIDVLQNELGLDIPVAGLQKNDKHQTSELLYGASAEIVPLKKNSQAFYLLHRIQDEVHRFAITFHRQTRQKTGLKSILDDIDGIGNKRKTLLLRSFGSIKKMKEATLEDFKNIGIPENVAKNLHEQLHK</sequence>